<proteinExistence type="inferred from homology"/>
<organism>
    <name type="scientific">Shewanella sediminis (strain HAW-EB3)</name>
    <dbReference type="NCBI Taxonomy" id="425104"/>
    <lineage>
        <taxon>Bacteria</taxon>
        <taxon>Pseudomonadati</taxon>
        <taxon>Pseudomonadota</taxon>
        <taxon>Gammaproteobacteria</taxon>
        <taxon>Alteromonadales</taxon>
        <taxon>Shewanellaceae</taxon>
        <taxon>Shewanella</taxon>
    </lineage>
</organism>
<feature type="chain" id="PRO_1000088556" description="Isoleucine--tRNA ligase">
    <location>
        <begin position="1"/>
        <end position="940"/>
    </location>
</feature>
<feature type="short sequence motif" description="'HIGH' region">
    <location>
        <begin position="58"/>
        <end position="68"/>
    </location>
</feature>
<feature type="short sequence motif" description="'KMSKS' region">
    <location>
        <begin position="605"/>
        <end position="609"/>
    </location>
</feature>
<feature type="binding site" evidence="1">
    <location>
        <position position="564"/>
    </location>
    <ligand>
        <name>L-isoleucyl-5'-AMP</name>
        <dbReference type="ChEBI" id="CHEBI:178002"/>
    </ligand>
</feature>
<feature type="binding site" evidence="1">
    <location>
        <position position="608"/>
    </location>
    <ligand>
        <name>ATP</name>
        <dbReference type="ChEBI" id="CHEBI:30616"/>
    </ligand>
</feature>
<feature type="binding site" evidence="1">
    <location>
        <position position="903"/>
    </location>
    <ligand>
        <name>Zn(2+)</name>
        <dbReference type="ChEBI" id="CHEBI:29105"/>
    </ligand>
</feature>
<feature type="binding site" evidence="1">
    <location>
        <position position="906"/>
    </location>
    <ligand>
        <name>Zn(2+)</name>
        <dbReference type="ChEBI" id="CHEBI:29105"/>
    </ligand>
</feature>
<feature type="binding site" evidence="1">
    <location>
        <position position="923"/>
    </location>
    <ligand>
        <name>Zn(2+)</name>
        <dbReference type="ChEBI" id="CHEBI:29105"/>
    </ligand>
</feature>
<feature type="binding site" evidence="1">
    <location>
        <position position="926"/>
    </location>
    <ligand>
        <name>Zn(2+)</name>
        <dbReference type="ChEBI" id="CHEBI:29105"/>
    </ligand>
</feature>
<protein>
    <recommendedName>
        <fullName evidence="1">Isoleucine--tRNA ligase</fullName>
        <ecNumber evidence="1">6.1.1.5</ecNumber>
    </recommendedName>
    <alternativeName>
        <fullName evidence="1">Isoleucyl-tRNA synthetase</fullName>
        <shortName evidence="1">IleRS</shortName>
    </alternativeName>
</protein>
<keyword id="KW-0030">Aminoacyl-tRNA synthetase</keyword>
<keyword id="KW-0067">ATP-binding</keyword>
<keyword id="KW-0963">Cytoplasm</keyword>
<keyword id="KW-0436">Ligase</keyword>
<keyword id="KW-0479">Metal-binding</keyword>
<keyword id="KW-0547">Nucleotide-binding</keyword>
<keyword id="KW-0648">Protein biosynthesis</keyword>
<keyword id="KW-1185">Reference proteome</keyword>
<keyword id="KW-0862">Zinc</keyword>
<evidence type="ECO:0000255" key="1">
    <source>
        <dbReference type="HAMAP-Rule" id="MF_02002"/>
    </source>
</evidence>
<name>SYI_SHESH</name>
<comment type="function">
    <text evidence="1">Catalyzes the attachment of isoleucine to tRNA(Ile). As IleRS can inadvertently accommodate and process structurally similar amino acids such as valine, to avoid such errors it has two additional distinct tRNA(Ile)-dependent editing activities. One activity is designated as 'pretransfer' editing and involves the hydrolysis of activated Val-AMP. The other activity is designated 'posttransfer' editing and involves deacylation of mischarged Val-tRNA(Ile).</text>
</comment>
<comment type="catalytic activity">
    <reaction evidence="1">
        <text>tRNA(Ile) + L-isoleucine + ATP = L-isoleucyl-tRNA(Ile) + AMP + diphosphate</text>
        <dbReference type="Rhea" id="RHEA:11060"/>
        <dbReference type="Rhea" id="RHEA-COMP:9666"/>
        <dbReference type="Rhea" id="RHEA-COMP:9695"/>
        <dbReference type="ChEBI" id="CHEBI:30616"/>
        <dbReference type="ChEBI" id="CHEBI:33019"/>
        <dbReference type="ChEBI" id="CHEBI:58045"/>
        <dbReference type="ChEBI" id="CHEBI:78442"/>
        <dbReference type="ChEBI" id="CHEBI:78528"/>
        <dbReference type="ChEBI" id="CHEBI:456215"/>
        <dbReference type="EC" id="6.1.1.5"/>
    </reaction>
</comment>
<comment type="cofactor">
    <cofactor evidence="1">
        <name>Zn(2+)</name>
        <dbReference type="ChEBI" id="CHEBI:29105"/>
    </cofactor>
    <text evidence="1">Binds 1 zinc ion per subunit.</text>
</comment>
<comment type="subunit">
    <text evidence="1">Monomer.</text>
</comment>
<comment type="subcellular location">
    <subcellularLocation>
        <location evidence="1">Cytoplasm</location>
    </subcellularLocation>
</comment>
<comment type="domain">
    <text evidence="1">IleRS has two distinct active sites: one for aminoacylation and one for editing. The misactivated valine is translocated from the active site to the editing site, which sterically excludes the correctly activated isoleucine. The single editing site contains two valyl binding pockets, one specific for each substrate (Val-AMP or Val-tRNA(Ile)).</text>
</comment>
<comment type="similarity">
    <text evidence="1">Belongs to the class-I aminoacyl-tRNA synthetase family. IleS type 1 subfamily.</text>
</comment>
<sequence length="940" mass="105890">MSDYKSTLNLPETEFPMRGNLANREPVMLKSWTEDGLYQQIRDSRIGRKPFILHDGPPYANGSIHIGHSVNKILKDIIVKSKTLSGFDAPYIPGWDCHGLPIELKVEQKVGKPGHKVTAAQFREKCREYAAKQVDGQREDFIRLGVFADWNKPYLTMDFDTEANIVRSLAKVIDSGHLHKGVKPVHWCTDCGSALAEAEVEYEDKKSPAIDVAFAATDKAALLAKFDVQDCTGSASMVIWTTTPWTLPANRALSVSPELDYVLVEFVKDGATSTVILADALVESCMERYGVESHKALGKAKGQELELLRFNHPFYDFDVPVILGDHVTVDSGTGVVHTAPGHGQDDFVVGQKYGLEVANPVGDNGVYKADTEIFAGQHVFKANDNVVALLEEKGALIKHEKIMHSYPHCWRHKTPIIFRATPQWFISMDQKGLRKQALGEIEQTQWIPDWGQSRIEKMVENRPDWCISRQRTWGVPITLFVHRETEELHPDSISLMERVANRIEREGIQAWWDLDAQELLGDEAEQYRKVTDTLDVWYDSGSSFSSVVASRPEYQGHEIDLYLEGSDQHRGWFMSSLMISTAMNGKAPYKQVLTHGFTVDGNGRKMSKSIGNVIAPQTVTNKLGADILRLWVAATDYSGEMTVSDEILKRSADAYRRIRNTARFLLANINGFDPVNDLVAVEEMVALDRWVVRRAAALQEELIEAYEQYNFHVVTQKLMQFCSVELGSFYLDIIKDRQYTAKGDSVARRSCQSALYLISEAMVRWIAPILSFTADEIWQLLPGEREKYVFTQEWYQGLESVTLDSDLSDEYWEQLLTVRGEVNKVIEQARREKQIGGSLEAEITLYADDALSQALATLGDELRFVLLTSKTQIVALSSAPADAIETEMTSLKLGLHKAESEKCERCWHHREDVGQVEAHPTLCTRCVTNIEGDGEVRQFA</sequence>
<gene>
    <name evidence="1" type="primary">ileS</name>
    <name type="ordered locus">Ssed_1194</name>
</gene>
<dbReference type="EC" id="6.1.1.5" evidence="1"/>
<dbReference type="EMBL" id="CP000821">
    <property type="protein sequence ID" value="ABV35805.1"/>
    <property type="molecule type" value="Genomic_DNA"/>
</dbReference>
<dbReference type="RefSeq" id="WP_012141541.1">
    <property type="nucleotide sequence ID" value="NC_009831.1"/>
</dbReference>
<dbReference type="SMR" id="A8FSI2"/>
<dbReference type="STRING" id="425104.Ssed_1194"/>
<dbReference type="KEGG" id="sse:Ssed_1194"/>
<dbReference type="eggNOG" id="COG0060">
    <property type="taxonomic scope" value="Bacteria"/>
</dbReference>
<dbReference type="HOGENOM" id="CLU_001493_7_1_6"/>
<dbReference type="OrthoDB" id="9810365at2"/>
<dbReference type="Proteomes" id="UP000002015">
    <property type="component" value="Chromosome"/>
</dbReference>
<dbReference type="GO" id="GO:0005829">
    <property type="term" value="C:cytosol"/>
    <property type="evidence" value="ECO:0007669"/>
    <property type="project" value="TreeGrafter"/>
</dbReference>
<dbReference type="GO" id="GO:0002161">
    <property type="term" value="F:aminoacyl-tRNA deacylase activity"/>
    <property type="evidence" value="ECO:0007669"/>
    <property type="project" value="InterPro"/>
</dbReference>
<dbReference type="GO" id="GO:0005524">
    <property type="term" value="F:ATP binding"/>
    <property type="evidence" value="ECO:0007669"/>
    <property type="project" value="UniProtKB-UniRule"/>
</dbReference>
<dbReference type="GO" id="GO:0004822">
    <property type="term" value="F:isoleucine-tRNA ligase activity"/>
    <property type="evidence" value="ECO:0007669"/>
    <property type="project" value="UniProtKB-UniRule"/>
</dbReference>
<dbReference type="GO" id="GO:0000049">
    <property type="term" value="F:tRNA binding"/>
    <property type="evidence" value="ECO:0007669"/>
    <property type="project" value="InterPro"/>
</dbReference>
<dbReference type="GO" id="GO:0008270">
    <property type="term" value="F:zinc ion binding"/>
    <property type="evidence" value="ECO:0007669"/>
    <property type="project" value="UniProtKB-UniRule"/>
</dbReference>
<dbReference type="GO" id="GO:0006428">
    <property type="term" value="P:isoleucyl-tRNA aminoacylation"/>
    <property type="evidence" value="ECO:0007669"/>
    <property type="project" value="UniProtKB-UniRule"/>
</dbReference>
<dbReference type="CDD" id="cd07960">
    <property type="entry name" value="Anticodon_Ia_Ile_BEm"/>
    <property type="match status" value="1"/>
</dbReference>
<dbReference type="CDD" id="cd00818">
    <property type="entry name" value="IleRS_core"/>
    <property type="match status" value="1"/>
</dbReference>
<dbReference type="FunFam" id="1.10.730.20:FF:000001">
    <property type="entry name" value="Isoleucine--tRNA ligase"/>
    <property type="match status" value="1"/>
</dbReference>
<dbReference type="FunFam" id="3.40.50.620:FF:000042">
    <property type="entry name" value="Isoleucine--tRNA ligase"/>
    <property type="match status" value="1"/>
</dbReference>
<dbReference type="FunFam" id="3.40.50.620:FF:000048">
    <property type="entry name" value="Isoleucine--tRNA ligase"/>
    <property type="match status" value="1"/>
</dbReference>
<dbReference type="Gene3D" id="1.10.730.20">
    <property type="match status" value="1"/>
</dbReference>
<dbReference type="Gene3D" id="3.40.50.620">
    <property type="entry name" value="HUPs"/>
    <property type="match status" value="2"/>
</dbReference>
<dbReference type="HAMAP" id="MF_02002">
    <property type="entry name" value="Ile_tRNA_synth_type1"/>
    <property type="match status" value="1"/>
</dbReference>
<dbReference type="InterPro" id="IPR001412">
    <property type="entry name" value="aa-tRNA-synth_I_CS"/>
</dbReference>
<dbReference type="InterPro" id="IPR002300">
    <property type="entry name" value="aa-tRNA-synth_Ia"/>
</dbReference>
<dbReference type="InterPro" id="IPR033708">
    <property type="entry name" value="Anticodon_Ile_BEm"/>
</dbReference>
<dbReference type="InterPro" id="IPR002301">
    <property type="entry name" value="Ile-tRNA-ligase"/>
</dbReference>
<dbReference type="InterPro" id="IPR023585">
    <property type="entry name" value="Ile-tRNA-ligase_type1"/>
</dbReference>
<dbReference type="InterPro" id="IPR050081">
    <property type="entry name" value="Ile-tRNA_ligase"/>
</dbReference>
<dbReference type="InterPro" id="IPR013155">
    <property type="entry name" value="M/V/L/I-tRNA-synth_anticd-bd"/>
</dbReference>
<dbReference type="InterPro" id="IPR014729">
    <property type="entry name" value="Rossmann-like_a/b/a_fold"/>
</dbReference>
<dbReference type="InterPro" id="IPR009080">
    <property type="entry name" value="tRNAsynth_Ia_anticodon-bd"/>
</dbReference>
<dbReference type="InterPro" id="IPR009008">
    <property type="entry name" value="Val/Leu/Ile-tRNA-synth_edit"/>
</dbReference>
<dbReference type="InterPro" id="IPR010663">
    <property type="entry name" value="Znf_FPG/IleRS"/>
</dbReference>
<dbReference type="NCBIfam" id="TIGR00392">
    <property type="entry name" value="ileS"/>
    <property type="match status" value="1"/>
</dbReference>
<dbReference type="PANTHER" id="PTHR42765:SF1">
    <property type="entry name" value="ISOLEUCINE--TRNA LIGASE, MITOCHONDRIAL"/>
    <property type="match status" value="1"/>
</dbReference>
<dbReference type="PANTHER" id="PTHR42765">
    <property type="entry name" value="SOLEUCYL-TRNA SYNTHETASE"/>
    <property type="match status" value="1"/>
</dbReference>
<dbReference type="Pfam" id="PF08264">
    <property type="entry name" value="Anticodon_1"/>
    <property type="match status" value="1"/>
</dbReference>
<dbReference type="Pfam" id="PF00133">
    <property type="entry name" value="tRNA-synt_1"/>
    <property type="match status" value="1"/>
</dbReference>
<dbReference type="Pfam" id="PF06827">
    <property type="entry name" value="zf-FPG_IleRS"/>
    <property type="match status" value="1"/>
</dbReference>
<dbReference type="PRINTS" id="PR00984">
    <property type="entry name" value="TRNASYNTHILE"/>
</dbReference>
<dbReference type="SUPFAM" id="SSF47323">
    <property type="entry name" value="Anticodon-binding domain of a subclass of class I aminoacyl-tRNA synthetases"/>
    <property type="match status" value="1"/>
</dbReference>
<dbReference type="SUPFAM" id="SSF52374">
    <property type="entry name" value="Nucleotidylyl transferase"/>
    <property type="match status" value="1"/>
</dbReference>
<dbReference type="SUPFAM" id="SSF50677">
    <property type="entry name" value="ValRS/IleRS/LeuRS editing domain"/>
    <property type="match status" value="1"/>
</dbReference>
<dbReference type="PROSITE" id="PS00178">
    <property type="entry name" value="AA_TRNA_LIGASE_I"/>
    <property type="match status" value="1"/>
</dbReference>
<reference key="1">
    <citation type="submission" date="2007-08" db="EMBL/GenBank/DDBJ databases">
        <title>Complete sequence of Shewanella sediminis HAW-EB3.</title>
        <authorList>
            <consortium name="US DOE Joint Genome Institute"/>
            <person name="Copeland A."/>
            <person name="Lucas S."/>
            <person name="Lapidus A."/>
            <person name="Barry K."/>
            <person name="Glavina del Rio T."/>
            <person name="Dalin E."/>
            <person name="Tice H."/>
            <person name="Pitluck S."/>
            <person name="Chertkov O."/>
            <person name="Brettin T."/>
            <person name="Bruce D."/>
            <person name="Detter J.C."/>
            <person name="Han C."/>
            <person name="Schmutz J."/>
            <person name="Larimer F."/>
            <person name="Land M."/>
            <person name="Hauser L."/>
            <person name="Kyrpides N."/>
            <person name="Kim E."/>
            <person name="Zhao J.-S."/>
            <person name="Richardson P."/>
        </authorList>
    </citation>
    <scope>NUCLEOTIDE SEQUENCE [LARGE SCALE GENOMIC DNA]</scope>
    <source>
        <strain>HAW-EB3</strain>
    </source>
</reference>
<accession>A8FSI2</accession>